<organism>
    <name type="scientific">Drosophila pseudoobscura pseudoobscura</name>
    <name type="common">Fruit fly</name>
    <dbReference type="NCBI Taxonomy" id="46245"/>
    <lineage>
        <taxon>Eukaryota</taxon>
        <taxon>Metazoa</taxon>
        <taxon>Ecdysozoa</taxon>
        <taxon>Arthropoda</taxon>
        <taxon>Hexapoda</taxon>
        <taxon>Insecta</taxon>
        <taxon>Pterygota</taxon>
        <taxon>Neoptera</taxon>
        <taxon>Endopterygota</taxon>
        <taxon>Diptera</taxon>
        <taxon>Brachycera</taxon>
        <taxon>Muscomorpha</taxon>
        <taxon>Ephydroidea</taxon>
        <taxon>Drosophilidae</taxon>
        <taxon>Drosophila</taxon>
        <taxon>Sophophora</taxon>
    </lineage>
</organism>
<proteinExistence type="inferred from homology"/>
<reference key="1">
    <citation type="journal article" date="2005" name="Genome Res.">
        <title>Comparative genome sequencing of Drosophila pseudoobscura: chromosomal, gene, and cis-element evolution.</title>
        <authorList>
            <person name="Richards S."/>
            <person name="Liu Y."/>
            <person name="Bettencourt B.R."/>
            <person name="Hradecky P."/>
            <person name="Letovsky S."/>
            <person name="Nielsen R."/>
            <person name="Thornton K."/>
            <person name="Hubisz M.J."/>
            <person name="Chen R."/>
            <person name="Meisel R.P."/>
            <person name="Couronne O."/>
            <person name="Hua S."/>
            <person name="Smith M.A."/>
            <person name="Zhang P."/>
            <person name="Liu J."/>
            <person name="Bussemaker H.J."/>
            <person name="van Batenburg M.F."/>
            <person name="Howells S.L."/>
            <person name="Scherer S.E."/>
            <person name="Sodergren E."/>
            <person name="Matthews B.B."/>
            <person name="Crosby M.A."/>
            <person name="Schroeder A.J."/>
            <person name="Ortiz-Barrientos D."/>
            <person name="Rives C.M."/>
            <person name="Metzker M.L."/>
            <person name="Muzny D.M."/>
            <person name="Scott G."/>
            <person name="Steffen D."/>
            <person name="Wheeler D.A."/>
            <person name="Worley K.C."/>
            <person name="Havlak P."/>
            <person name="Durbin K.J."/>
            <person name="Egan A."/>
            <person name="Gill R."/>
            <person name="Hume J."/>
            <person name="Morgan M.B."/>
            <person name="Miner G."/>
            <person name="Hamilton C."/>
            <person name="Huang Y."/>
            <person name="Waldron L."/>
            <person name="Verduzco D."/>
            <person name="Clerc-Blankenburg K.P."/>
            <person name="Dubchak I."/>
            <person name="Noor M.A.F."/>
            <person name="Anderson W."/>
            <person name="White K.P."/>
            <person name="Clark A.G."/>
            <person name="Schaeffer S.W."/>
            <person name="Gelbart W.M."/>
            <person name="Weinstock G.M."/>
            <person name="Gibbs R.A."/>
        </authorList>
    </citation>
    <scope>NUCLEOTIDE SEQUENCE [LARGE SCALE GENOMIC DNA]</scope>
    <source>
        <strain>MV2-25 / Tucson 14011-0121.94</strain>
    </source>
</reference>
<keyword id="KW-0539">Nucleus</keyword>
<keyword id="KW-1185">Reference proteome</keyword>
<keyword id="KW-0677">Repeat</keyword>
<keyword id="KW-0690">Ribosome biogenesis</keyword>
<keyword id="KW-0698">rRNA processing</keyword>
<keyword id="KW-0853">WD repeat</keyword>
<comment type="function">
    <text evidence="1">Required for maturation of ribosomal RNAs and formation of the large ribosomal subunit.</text>
</comment>
<comment type="subcellular location">
    <subcellularLocation>
        <location evidence="1">Nucleus</location>
        <location evidence="1">Nucleolus</location>
    </subcellularLocation>
    <subcellularLocation>
        <location evidence="1">Nucleus</location>
        <location evidence="1">Nucleoplasm</location>
    </subcellularLocation>
</comment>
<comment type="similarity">
    <text evidence="1">Belongs to the WD repeat WDR12/YTM1 family.</text>
</comment>
<dbReference type="EMBL" id="CH379061">
    <property type="protein sequence ID" value="EAL33124.1"/>
    <property type="molecule type" value="Genomic_DNA"/>
</dbReference>
<dbReference type="RefSeq" id="XP_001356065.1">
    <property type="nucleotide sequence ID" value="XM_001356029.3"/>
</dbReference>
<dbReference type="SMR" id="Q29KQ0"/>
<dbReference type="FunCoup" id="Q29KQ0">
    <property type="interactions" value="1853"/>
</dbReference>
<dbReference type="STRING" id="46245.Q29KQ0"/>
<dbReference type="EnsemblMetazoa" id="FBtr0289041">
    <property type="protein sequence ID" value="FBpp0287479"/>
    <property type="gene ID" value="FBgn0079809"/>
</dbReference>
<dbReference type="KEGG" id="dpo:4816649"/>
<dbReference type="eggNOG" id="KOG0313">
    <property type="taxonomic scope" value="Eukaryota"/>
</dbReference>
<dbReference type="HOGENOM" id="CLU_000288_57_0_1"/>
<dbReference type="InParanoid" id="Q29KQ0"/>
<dbReference type="OMA" id="DHKYVEF"/>
<dbReference type="PhylomeDB" id="Q29KQ0"/>
<dbReference type="Proteomes" id="UP000001819">
    <property type="component" value="Chromosome 4"/>
</dbReference>
<dbReference type="Bgee" id="FBgn0079809">
    <property type="expression patterns" value="Expressed in female reproductive system and 3 other cell types or tissues"/>
</dbReference>
<dbReference type="GO" id="GO:0005654">
    <property type="term" value="C:nucleoplasm"/>
    <property type="evidence" value="ECO:0007669"/>
    <property type="project" value="UniProtKB-SubCell"/>
</dbReference>
<dbReference type="GO" id="GO:0070545">
    <property type="term" value="C:PeBoW complex"/>
    <property type="evidence" value="ECO:0000250"/>
    <property type="project" value="UniProtKB"/>
</dbReference>
<dbReference type="GO" id="GO:0030687">
    <property type="term" value="C:preribosome, large subunit precursor"/>
    <property type="evidence" value="ECO:0007669"/>
    <property type="project" value="UniProtKB-UniRule"/>
</dbReference>
<dbReference type="GO" id="GO:0043021">
    <property type="term" value="F:ribonucleoprotein complex binding"/>
    <property type="evidence" value="ECO:0007669"/>
    <property type="project" value="UniProtKB-UniRule"/>
</dbReference>
<dbReference type="GO" id="GO:0000466">
    <property type="term" value="P:maturation of 5.8S rRNA from tricistronic rRNA transcript (SSU-rRNA, 5.8S rRNA, LSU-rRNA)"/>
    <property type="evidence" value="ECO:0007669"/>
    <property type="project" value="UniProtKB-UniRule"/>
</dbReference>
<dbReference type="GO" id="GO:0000463">
    <property type="term" value="P:maturation of LSU-rRNA from tricistronic rRNA transcript (SSU-rRNA, 5.8S rRNA, LSU-rRNA)"/>
    <property type="evidence" value="ECO:0000250"/>
    <property type="project" value="UniProtKB"/>
</dbReference>
<dbReference type="CDD" id="cd00200">
    <property type="entry name" value="WD40"/>
    <property type="match status" value="1"/>
</dbReference>
<dbReference type="FunFam" id="2.130.10.10:FF:000878">
    <property type="entry name" value="Ribosome biogenesis protein WDR12 homolog"/>
    <property type="match status" value="1"/>
</dbReference>
<dbReference type="FunFam" id="2.130.10.10:FF:000989">
    <property type="entry name" value="Ribosome biogenesis protein WDR12 homolog"/>
    <property type="match status" value="1"/>
</dbReference>
<dbReference type="FunFam" id="2.130.10.10:FF:001205">
    <property type="entry name" value="Ribosome biogenesis protein WDR12 homolog"/>
    <property type="match status" value="1"/>
</dbReference>
<dbReference type="Gene3D" id="2.130.10.10">
    <property type="entry name" value="YVTN repeat-like/Quinoprotein amine dehydrogenase"/>
    <property type="match status" value="3"/>
</dbReference>
<dbReference type="HAMAP" id="MF_03029">
    <property type="entry name" value="WDR12"/>
    <property type="match status" value="1"/>
</dbReference>
<dbReference type="InterPro" id="IPR020472">
    <property type="entry name" value="G-protein_beta_WD-40_rep"/>
</dbReference>
<dbReference type="InterPro" id="IPR012972">
    <property type="entry name" value="NLE"/>
</dbReference>
<dbReference type="InterPro" id="IPR015943">
    <property type="entry name" value="WD40/YVTN_repeat-like_dom_sf"/>
</dbReference>
<dbReference type="InterPro" id="IPR019775">
    <property type="entry name" value="WD40_repeat_CS"/>
</dbReference>
<dbReference type="InterPro" id="IPR036322">
    <property type="entry name" value="WD40_repeat_dom_sf"/>
</dbReference>
<dbReference type="InterPro" id="IPR001680">
    <property type="entry name" value="WD40_rpt"/>
</dbReference>
<dbReference type="InterPro" id="IPR028599">
    <property type="entry name" value="WDR12/Ytm1"/>
</dbReference>
<dbReference type="PANTHER" id="PTHR19855:SF11">
    <property type="entry name" value="RIBOSOME BIOGENESIS PROTEIN WDR12"/>
    <property type="match status" value="1"/>
</dbReference>
<dbReference type="PANTHER" id="PTHR19855">
    <property type="entry name" value="WD40 REPEAT PROTEIN 12, 37"/>
    <property type="match status" value="1"/>
</dbReference>
<dbReference type="Pfam" id="PF08154">
    <property type="entry name" value="NLE"/>
    <property type="match status" value="1"/>
</dbReference>
<dbReference type="Pfam" id="PF00400">
    <property type="entry name" value="WD40"/>
    <property type="match status" value="7"/>
</dbReference>
<dbReference type="PRINTS" id="PR00320">
    <property type="entry name" value="GPROTEINBRPT"/>
</dbReference>
<dbReference type="SMART" id="SM00320">
    <property type="entry name" value="WD40"/>
    <property type="match status" value="7"/>
</dbReference>
<dbReference type="SUPFAM" id="SSF50978">
    <property type="entry name" value="WD40 repeat-like"/>
    <property type="match status" value="1"/>
</dbReference>
<dbReference type="PROSITE" id="PS00678">
    <property type="entry name" value="WD_REPEATS_1"/>
    <property type="match status" value="1"/>
</dbReference>
<dbReference type="PROSITE" id="PS50082">
    <property type="entry name" value="WD_REPEATS_2"/>
    <property type="match status" value="4"/>
</dbReference>
<dbReference type="PROSITE" id="PS50294">
    <property type="entry name" value="WD_REPEATS_REGION"/>
    <property type="match status" value="1"/>
</dbReference>
<sequence>MDVDNGEGQVQVHLKTKQEHYAVPDVPYAIDGTVTTAELNTFVNALLLSKGSSAVDFDFLVFDEYLRGRLCDHLREKAISFEDAIEIEYVERFPAPEPQDCLLHDDWVSAVKASGKWILTGCYDNTLNIWTNKGKHILTIPGHTAPIKAVDWISLDDDTGRFVSSSQDQTAMLWQWNVGANTVECVSVCKGHERGVDSVSVSPDGQRFATGSWDTMLKVWSAELEDAGEGTSKRMKESGVRTPKITLQGHRESISAVQWMDASTLLTGSWDHTLKVWDLSLEGIKAEISTNKSIFDASYSKLNHLILTASADKNLRLYDSRTNQGSVVRNTYLGHNAWVQTVMWSTTEEFLFVSGSYDNQNKLWDCRSPKAPLYDLLGHGEKVLDIDWSNPKYIVSGGSDNTVRVFKSRKALVENMDTK</sequence>
<feature type="chain" id="PRO_0000369561" description="Ribosome biogenesis protein WDR12 homolog">
    <location>
        <begin position="1"/>
        <end position="419"/>
    </location>
</feature>
<feature type="repeat" description="WD 1">
    <location>
        <begin position="103"/>
        <end position="141"/>
    </location>
</feature>
<feature type="repeat" description="WD 2">
    <location>
        <begin position="142"/>
        <end position="184"/>
    </location>
</feature>
<feature type="repeat" description="WD 3">
    <location>
        <begin position="191"/>
        <end position="230"/>
    </location>
</feature>
<feature type="repeat" description="WD 4">
    <location>
        <begin position="249"/>
        <end position="287"/>
    </location>
</feature>
<feature type="repeat" description="WD 5">
    <location>
        <begin position="289"/>
        <end position="328"/>
    </location>
</feature>
<feature type="repeat" description="WD 6">
    <location>
        <begin position="334"/>
        <end position="374"/>
    </location>
</feature>
<feature type="repeat" description="WD 7">
    <location>
        <begin position="378"/>
        <end position="416"/>
    </location>
</feature>
<feature type="region of interest" description="Ubiquitin-like (UBL) domain" evidence="1">
    <location>
        <begin position="10"/>
        <end position="91"/>
    </location>
</feature>
<name>WDR12_DROPS</name>
<protein>
    <recommendedName>
        <fullName evidence="1">Ribosome biogenesis protein WDR12 homolog</fullName>
    </recommendedName>
</protein>
<evidence type="ECO:0000255" key="1">
    <source>
        <dbReference type="HAMAP-Rule" id="MF_03029"/>
    </source>
</evidence>
<gene>
    <name type="ORF">GA19813</name>
</gene>
<accession>Q29KQ0</accession>